<dbReference type="EC" id="3.1.1.14" evidence="3"/>
<dbReference type="EMBL" id="AF134302">
    <property type="protein sequence ID" value="AAF27046.1"/>
    <property type="molecule type" value="mRNA"/>
</dbReference>
<dbReference type="EMBL" id="AB026651">
    <property type="protein sequence ID" value="BAB11315.1"/>
    <property type="molecule type" value="Genomic_DNA"/>
</dbReference>
<dbReference type="EMBL" id="CP002688">
    <property type="protein sequence ID" value="AED95018.1"/>
    <property type="molecule type" value="Genomic_DNA"/>
</dbReference>
<dbReference type="EMBL" id="BT002898">
    <property type="protein sequence ID" value="AAO22714.1"/>
    <property type="molecule type" value="mRNA"/>
</dbReference>
<dbReference type="RefSeq" id="NP_199199.1">
    <property type="nucleotide sequence ID" value="NM_123753.3"/>
</dbReference>
<dbReference type="SMR" id="Q9M7I7"/>
<dbReference type="STRING" id="3702.Q9M7I7"/>
<dbReference type="SwissLipids" id="SLP:000001499"/>
<dbReference type="ESTHER" id="arath-clh2">
    <property type="family name" value="Chlorophyllase_Plant"/>
</dbReference>
<dbReference type="iPTMnet" id="Q9M7I7"/>
<dbReference type="PaxDb" id="3702-AT5G43860.1"/>
<dbReference type="ProteomicsDB" id="246734"/>
<dbReference type="EnsemblPlants" id="AT5G43860.1">
    <property type="protein sequence ID" value="AT5G43860.1"/>
    <property type="gene ID" value="AT5G43860"/>
</dbReference>
<dbReference type="GeneID" id="834408"/>
<dbReference type="Gramene" id="AT5G43860.1">
    <property type="protein sequence ID" value="AT5G43860.1"/>
    <property type="gene ID" value="AT5G43860"/>
</dbReference>
<dbReference type="KEGG" id="ath:AT5G43860"/>
<dbReference type="Araport" id="AT5G43860"/>
<dbReference type="TAIR" id="AT5G43860">
    <property type="gene designation" value="CLH2"/>
</dbReference>
<dbReference type="eggNOG" id="ENOG502QRKW">
    <property type="taxonomic scope" value="Eukaryota"/>
</dbReference>
<dbReference type="HOGENOM" id="CLU_064603_0_0_1"/>
<dbReference type="InParanoid" id="Q9M7I7"/>
<dbReference type="OMA" id="KPAWYFV"/>
<dbReference type="PhylomeDB" id="Q9M7I7"/>
<dbReference type="BioCyc" id="ARA:AT5G43860-MONOMER"/>
<dbReference type="BioCyc" id="MetaCyc:AT5G43860-MONOMER"/>
<dbReference type="BRENDA" id="3.1.1.14">
    <property type="organism ID" value="399"/>
</dbReference>
<dbReference type="UniPathway" id="UPA00674"/>
<dbReference type="PRO" id="PR:Q9M7I7"/>
<dbReference type="Proteomes" id="UP000006548">
    <property type="component" value="Chromosome 5"/>
</dbReference>
<dbReference type="ExpressionAtlas" id="Q9M7I7">
    <property type="expression patterns" value="baseline and differential"/>
</dbReference>
<dbReference type="GO" id="GO:0009507">
    <property type="term" value="C:chloroplast"/>
    <property type="evidence" value="ECO:0000250"/>
    <property type="project" value="TAIR"/>
</dbReference>
<dbReference type="GO" id="GO:0005829">
    <property type="term" value="C:cytosol"/>
    <property type="evidence" value="ECO:0007669"/>
    <property type="project" value="UniProtKB-SubCell"/>
</dbReference>
<dbReference type="GO" id="GO:0047746">
    <property type="term" value="F:chlorophyllase activity"/>
    <property type="evidence" value="ECO:0000314"/>
    <property type="project" value="TAIR"/>
</dbReference>
<dbReference type="GO" id="GO:0015996">
    <property type="term" value="P:chlorophyll catabolic process"/>
    <property type="evidence" value="ECO:0000314"/>
    <property type="project" value="TAIR"/>
</dbReference>
<dbReference type="FunFam" id="3.40.50.1820:FF:000159">
    <property type="entry name" value="Chlorophyllase-2, chloroplastic"/>
    <property type="match status" value="1"/>
</dbReference>
<dbReference type="Gene3D" id="3.40.50.1820">
    <property type="entry name" value="alpha/beta hydrolase"/>
    <property type="match status" value="1"/>
</dbReference>
<dbReference type="InterPro" id="IPR029058">
    <property type="entry name" value="AB_hydrolase_fold"/>
</dbReference>
<dbReference type="InterPro" id="IPR048264">
    <property type="entry name" value="Chlorophyllase"/>
</dbReference>
<dbReference type="InterPro" id="IPR017395">
    <property type="entry name" value="Chlorophyllase-like"/>
</dbReference>
<dbReference type="PANTHER" id="PTHR33428:SF2">
    <property type="entry name" value="CHLOROPHYLLASE-2"/>
    <property type="match status" value="1"/>
</dbReference>
<dbReference type="PANTHER" id="PTHR33428">
    <property type="entry name" value="CHLOROPHYLLASE-2, CHLOROPLASTIC"/>
    <property type="match status" value="1"/>
</dbReference>
<dbReference type="Pfam" id="PF07224">
    <property type="entry name" value="Chlorophyllase"/>
    <property type="match status" value="1"/>
</dbReference>
<dbReference type="PIRSF" id="PIRSF038128">
    <property type="entry name" value="Chlorophyllase_chloroplast"/>
    <property type="match status" value="1"/>
</dbReference>
<dbReference type="SUPFAM" id="SSF53474">
    <property type="entry name" value="alpha/beta-Hydrolases"/>
    <property type="match status" value="1"/>
</dbReference>
<gene>
    <name evidence="9" type="primary">CLH2</name>
    <name type="ordered locus">At5g43860</name>
    <name type="ORF">MQD19.22</name>
</gene>
<name>CLH2_ARATH</name>
<proteinExistence type="evidence at protein level"/>
<reference key="1">
    <citation type="journal article" date="1999" name="Proc. Natl. Acad. Sci. U.S.A.">
        <title>Cloning of chlorophyllase, the key enzyme in chlorophyll degradation: finding of a lipase motif and the induction by methyl jasmonate.</title>
        <authorList>
            <person name="Tsuchiya T."/>
            <person name="Ohta H."/>
            <person name="Okawa K."/>
            <person name="Iwamatsu A."/>
            <person name="Shimada H."/>
            <person name="Masuda T."/>
            <person name="Takamiya K."/>
        </authorList>
    </citation>
    <scope>NUCLEOTIDE SEQUENCE [MRNA]</scope>
    <scope>FUNCTION</scope>
    <scope>CATALYTIC ACTIVITY</scope>
    <source>
        <strain>cv. Columbia</strain>
    </source>
</reference>
<reference key="2">
    <citation type="submission" date="1999-04" db="EMBL/GenBank/DDBJ databases">
        <title>Structural analysis of Arabidopsis thaliana chromosome 5. XI.</title>
        <authorList>
            <person name="Kaneko T."/>
            <person name="Katoh T."/>
            <person name="Asamizu E."/>
            <person name="Sato S."/>
            <person name="Nakamura Y."/>
            <person name="Kotani H."/>
            <person name="Tabata S."/>
        </authorList>
    </citation>
    <scope>NUCLEOTIDE SEQUENCE [LARGE SCALE GENOMIC DNA]</scope>
    <source>
        <strain>cv. Columbia</strain>
    </source>
</reference>
<reference key="3">
    <citation type="journal article" date="2017" name="Plant J.">
        <title>Araport11: a complete reannotation of the Arabidopsis thaliana reference genome.</title>
        <authorList>
            <person name="Cheng C.Y."/>
            <person name="Krishnakumar V."/>
            <person name="Chan A.P."/>
            <person name="Thibaud-Nissen F."/>
            <person name="Schobel S."/>
            <person name="Town C.D."/>
        </authorList>
    </citation>
    <scope>GENOME REANNOTATION</scope>
    <source>
        <strain>cv. Columbia</strain>
    </source>
</reference>
<reference key="4">
    <citation type="journal article" date="2003" name="Science">
        <title>Empirical analysis of transcriptional activity in the Arabidopsis genome.</title>
        <authorList>
            <person name="Yamada K."/>
            <person name="Lim J."/>
            <person name="Dale J.M."/>
            <person name="Chen H."/>
            <person name="Shinn P."/>
            <person name="Palm C.J."/>
            <person name="Southwick A.M."/>
            <person name="Wu H.C."/>
            <person name="Kim C.J."/>
            <person name="Nguyen M."/>
            <person name="Pham P.K."/>
            <person name="Cheuk R.F."/>
            <person name="Karlin-Newmann G."/>
            <person name="Liu S.X."/>
            <person name="Lam B."/>
            <person name="Sakano H."/>
            <person name="Wu T."/>
            <person name="Yu G."/>
            <person name="Miranda M."/>
            <person name="Quach H.L."/>
            <person name="Tripp M."/>
            <person name="Chang C.H."/>
            <person name="Lee J.M."/>
            <person name="Toriumi M.J."/>
            <person name="Chan M.M."/>
            <person name="Tang C.C."/>
            <person name="Onodera C.S."/>
            <person name="Deng J.M."/>
            <person name="Akiyama K."/>
            <person name="Ansari Y."/>
            <person name="Arakawa T."/>
            <person name="Banh J."/>
            <person name="Banno F."/>
            <person name="Bowser L."/>
            <person name="Brooks S.Y."/>
            <person name="Carninci P."/>
            <person name="Chao Q."/>
            <person name="Choy N."/>
            <person name="Enju A."/>
            <person name="Goldsmith A.D."/>
            <person name="Gurjal M."/>
            <person name="Hansen N.F."/>
            <person name="Hayashizaki Y."/>
            <person name="Johnson-Hopson C."/>
            <person name="Hsuan V.W."/>
            <person name="Iida K."/>
            <person name="Karnes M."/>
            <person name="Khan S."/>
            <person name="Koesema E."/>
            <person name="Ishida J."/>
            <person name="Jiang P.X."/>
            <person name="Jones T."/>
            <person name="Kawai J."/>
            <person name="Kamiya A."/>
            <person name="Meyers C."/>
            <person name="Nakajima M."/>
            <person name="Narusaka M."/>
            <person name="Seki M."/>
            <person name="Sakurai T."/>
            <person name="Satou M."/>
            <person name="Tamse R."/>
            <person name="Vaysberg M."/>
            <person name="Wallender E.K."/>
            <person name="Wong C."/>
            <person name="Yamamura Y."/>
            <person name="Yuan S."/>
            <person name="Shinozaki K."/>
            <person name="Davis R.W."/>
            <person name="Theologis A."/>
            <person name="Ecker J.R."/>
        </authorList>
    </citation>
    <scope>NUCLEOTIDE SEQUENCE [LARGE SCALE MRNA] OF 26-318</scope>
    <source>
        <strain>cv. Columbia</strain>
    </source>
</reference>
<reference key="5">
    <citation type="journal article" date="2002" name="Plant Physiol.">
        <title>Altering the expression of the chlorophyllase gene ATHCOR1 in transgenic Arabidopsis caused changes in the chlorophyll-to-chlorophyllide ratio.</title>
        <authorList>
            <person name="Benedetti C.E."/>
            <person name="Arruda P."/>
        </authorList>
    </citation>
    <scope>CHARACTERIZATION</scope>
    <scope>TISSUE SPECIFICITY</scope>
    <scope>INDUCTION</scope>
</reference>
<reference key="6">
    <citation type="journal article" date="2007" name="FEBS Lett.">
        <title>The chlorophyllases AtCLH1 and AtCLH2 are not essential for senescence-related chlorophyll breakdown in Arabidopsis thaliana.</title>
        <authorList>
            <person name="Schenk N."/>
            <person name="Schelbert S."/>
            <person name="Kanwischer M."/>
            <person name="Goldschmidt E.E."/>
            <person name="Doermann P."/>
            <person name="Hoertensteiner S."/>
        </authorList>
    </citation>
    <scope>FUNCTION</scope>
    <scope>SUBCELLULAR LOCATION</scope>
</reference>
<reference key="7">
    <citation type="journal article" date="2007" name="Zhi Wu Sheng Li Yu Fen Zi Sheng Wu Xue Xue Bao">
        <title>Repression of AtCLH1 expression results in a decrease in the ratio of chlorophyll a/b but doesnot affect the rate of chlorophyll degradation during leaf senescence.</title>
        <authorList>
            <person name="Zhou X."/>
            <person name="Liao Y."/>
            <person name="Ren G.D."/>
            <person name="Zhang Y.Y."/>
            <person name="Chen W.J."/>
            <person name="Kuai B.K."/>
        </authorList>
    </citation>
    <scope>FUNCTION</scope>
</reference>
<reference key="8">
    <citation type="journal article" date="2011" name="Plant Physiol.">
        <title>Expression of enzymes involved in chlorophyll catabolism in Arabidopsis is light controlled.</title>
        <authorList>
            <person name="Banas A.K."/>
            <person name="Labuz J."/>
            <person name="Sztatelman O."/>
            <person name="Gabrys H."/>
            <person name="Fiedor L."/>
        </authorList>
    </citation>
    <scope>INDUCTION BY LIGHT</scope>
</reference>
<reference key="9">
    <citation type="journal article" date="2020" name="Plant Sci.">
        <title>Subcellular localization of chlorophyllase2 reveals it is not involved in chlorophyll degradation during senescence in Arabidopsis thaliana.</title>
        <authorList>
            <person name="Hu X."/>
            <person name="Jia T."/>
            <person name="Hoertensteiner S."/>
            <person name="Tanaka A."/>
            <person name="Tanaka R."/>
        </authorList>
    </citation>
    <scope>FUNCTION</scope>
    <scope>SUBCELLULAR LOCATION</scope>
</reference>
<organism>
    <name type="scientific">Arabidopsis thaliana</name>
    <name type="common">Mouse-ear cress</name>
    <dbReference type="NCBI Taxonomy" id="3702"/>
    <lineage>
        <taxon>Eukaryota</taxon>
        <taxon>Viridiplantae</taxon>
        <taxon>Streptophyta</taxon>
        <taxon>Embryophyta</taxon>
        <taxon>Tracheophyta</taxon>
        <taxon>Spermatophyta</taxon>
        <taxon>Magnoliopsida</taxon>
        <taxon>eudicotyledons</taxon>
        <taxon>Gunneridae</taxon>
        <taxon>Pentapetalae</taxon>
        <taxon>rosids</taxon>
        <taxon>malvids</taxon>
        <taxon>Brassicales</taxon>
        <taxon>Brassicaceae</taxon>
        <taxon>Camelineae</taxon>
        <taxon>Arabidopsis</taxon>
    </lineage>
</organism>
<sequence>MSSSSSRNAFEDGKYKSNLLTLDSSSRCCKITPSSRASPSPPKQLLVATPVEEGDYPVVMLLHGYLLYNSFYSQLMLHVSSHGFILIAPQLYSIAGPDTMDEIKSTAEIMDWLSVGLNHFLPAQVTPNLSKFALSGHSRGGKTAFAVALKKFGYSSNLKISTLIGIDPVDGTGKGKQTPPPVLAYLPNSFDLDKTPILVIGSGLGETARNPLFPPCAPPGVNHREFFRECQGPAWHFVAKDYGHLDMLDDDTKGIRGKSSYCLCKNGEERRPMRRFVGGLVVSFLKAYLEGDDRELVKIKDGCHEDVPVEIQEFEVIM</sequence>
<protein>
    <recommendedName>
        <fullName evidence="9">Chlorophyllase-2</fullName>
        <shortName evidence="9">AtCLH2</shortName>
        <ecNumber evidence="3">3.1.1.14</ecNumber>
    </recommendedName>
    <alternativeName>
        <fullName evidence="10">Chlorophyll-chlorophyllido hydrolase 2</fullName>
        <shortName evidence="9">Chlase 2</shortName>
    </alternativeName>
</protein>
<keyword id="KW-0881">Chlorophyll catabolism</keyword>
<keyword id="KW-0963">Cytoplasm</keyword>
<keyword id="KW-0378">Hydrolase</keyword>
<keyword id="KW-1185">Reference proteome</keyword>
<comment type="function">
    <text evidence="3 5 6 8">Catalyzes the hydrolysis of ester bond in chlorophyll to yield chlorophyllide and phytol (PubMed:10611389). Does not seem to be required for chlorophyll degradation during senescence (PubMed:17996203, PubMed:18349515, PubMed:31779896).</text>
</comment>
<comment type="catalytic activity">
    <reaction evidence="3">
        <text>a chlorophyll + H2O = a chlorophyllide + phytol + H(+)</text>
        <dbReference type="Rhea" id="RHEA:19605"/>
        <dbReference type="ChEBI" id="CHEBI:15377"/>
        <dbReference type="ChEBI" id="CHEBI:15378"/>
        <dbReference type="ChEBI" id="CHEBI:17327"/>
        <dbReference type="ChEBI" id="CHEBI:139291"/>
        <dbReference type="ChEBI" id="CHEBI:139292"/>
        <dbReference type="EC" id="3.1.1.14"/>
    </reaction>
    <physiologicalReaction direction="left-to-right" evidence="3">
        <dbReference type="Rhea" id="RHEA:19606"/>
    </physiologicalReaction>
</comment>
<comment type="catalytic activity">
    <reaction evidence="3">
        <text>chlorophyll a + H2O = phytol + chlorophyllide a + H(+)</text>
        <dbReference type="Rhea" id="RHEA:38011"/>
        <dbReference type="ChEBI" id="CHEBI:15377"/>
        <dbReference type="ChEBI" id="CHEBI:15378"/>
        <dbReference type="ChEBI" id="CHEBI:17327"/>
        <dbReference type="ChEBI" id="CHEBI:58416"/>
        <dbReference type="ChEBI" id="CHEBI:83348"/>
    </reaction>
    <physiologicalReaction direction="left-to-right" evidence="3">
        <dbReference type="Rhea" id="RHEA:38012"/>
    </physiologicalReaction>
</comment>
<comment type="pathway">
    <text evidence="10">Porphyrin-containing compound metabolism; chlorophyll degradation.</text>
</comment>
<comment type="subcellular location">
    <subcellularLocation>
        <location evidence="5 8">Cytoplasm</location>
        <location evidence="5 8">Cytosol</location>
    </subcellularLocation>
    <text evidence="8">Associates with the tonoplast and endoplasmic reticulum.</text>
</comment>
<comment type="tissue specificity">
    <text evidence="4">Expressed in leaves, flowers and flower buds, but not in roots.</text>
</comment>
<comment type="induction">
    <text evidence="4 7">Constitutively expressed at low level (PubMed:11950974). Not induced by methyl jasmonate treatment (PubMed:11950974). Induced by transition from dark to white light (PubMed:21896889).</text>
</comment>
<comment type="miscellaneous">
    <text evidence="4">Unlike CLH1, the expression of this protein is not dependent on the presence of a functional COI1 protein.</text>
</comment>
<comment type="similarity">
    <text evidence="10">Belongs to the AB hydrolase superfamily. Lipase family.</text>
</comment>
<feature type="chain" id="PRO_0000017836" description="Chlorophyllase-2">
    <location>
        <begin position="1"/>
        <end position="318"/>
    </location>
</feature>
<feature type="short sequence motif" description="GXSXG" evidence="1">
    <location>
        <begin position="136"/>
        <end position="140"/>
    </location>
</feature>
<feature type="active site" description="Nucleophile" evidence="2">
    <location>
        <position position="138"/>
    </location>
</feature>
<feature type="active site" description="Charge relay system" evidence="2">
    <location>
        <position position="167"/>
    </location>
</feature>
<feature type="active site" description="Charge relay system" evidence="2">
    <location>
        <position position="244"/>
    </location>
</feature>
<feature type="sequence conflict" description="In Ref. 4; AAO22714." evidence="10" ref="4">
    <original>R</original>
    <variation>C</variation>
    <location>
        <position position="27"/>
    </location>
</feature>
<feature type="sequence conflict" description="In Ref. 4; AAO22714." evidence="10" ref="4">
    <original>P</original>
    <variation>A</variation>
    <location>
        <position position="57"/>
    </location>
</feature>
<accession>Q9M7I7</accession>
<evidence type="ECO:0000250" key="1">
    <source>
        <dbReference type="UniProtKB" id="Q948R1"/>
    </source>
</evidence>
<evidence type="ECO:0000250" key="2">
    <source>
        <dbReference type="UniProtKB" id="Q9LE89"/>
    </source>
</evidence>
<evidence type="ECO:0000269" key="3">
    <source>
    </source>
</evidence>
<evidence type="ECO:0000269" key="4">
    <source>
    </source>
</evidence>
<evidence type="ECO:0000269" key="5">
    <source>
    </source>
</evidence>
<evidence type="ECO:0000269" key="6">
    <source>
    </source>
</evidence>
<evidence type="ECO:0000269" key="7">
    <source>
    </source>
</evidence>
<evidence type="ECO:0000269" key="8">
    <source>
    </source>
</evidence>
<evidence type="ECO:0000303" key="9">
    <source>
    </source>
</evidence>
<evidence type="ECO:0000305" key="10"/>